<sequence length="815" mass="93613">MRQIIDYDCNFKEEVGEVLKDISTSQNTLGFNVISILGCQSTGKSTLLNALFDTHFKVLDKLTSGYCQTTKGLWLGCGTESFNSPILIWDVEGTDSLERGEDRATFENRAALFSLAVSDCMILNIPLMNLTTYSSSNFGLLKTILNSWFSLKLDQNGITRGNIRKTTLLFAVRDITINDNDEMLGRKVVQILDLLWRQVAESQNSLGNQIPASFSDIFEVKVYGIPSLPNDYDGFKQVVAAIRYDLTTSILPKDYTRRIPLEGLEMYCKTVWKCIVDCQELNIPSQIKLVSRFRCEQAKDDILDGYKKSIKDLQKKMEKREFGFNEFSDCTLLVLENSLAAYFEVASKYDHEMSTNSSISLLVFIFHEFQNAVNSRMSLERQDLRQYTNILDYYKKGIEDHQVQYDKENNEESHYVSFDSSSWVNKELLKFDSLSLKWKTEFPSVISRQHLISPIKEKCIPDILNEISLSSQGKEVFLATYNTQEQRKLLSETLEIHSKKIYEKLVEEFFESLIKDILKEISPLLGDHFLSDPKLKLDDFWELTGSSIVNIHRLLVSKYEQQWITLFKNSNMNEFTSSGLEEEIALQLVLKFIQLIQQQSKYFHINIVDRFKNEFELDQDGVPRQWIGEDAKTMKELFIKAKNNSLQITNVFYPRKDQLIPLSGRFSNLFDKIIENSEDLSGIIALNKGHGNGKFLDSVPLISESNLKEIESKASQEITSIFSKAQLIQSTGRQPQNIPWWIYLLIIILGFDEITYVLTSPVLVTLLLLLASFIYSYLTGNFSSFCNYSQQFVIISTKILHYISGAIHSSLDNRK</sequence>
<organism>
    <name type="scientific">Cryptosporidium hominis</name>
    <dbReference type="NCBI Taxonomy" id="237895"/>
    <lineage>
        <taxon>Eukaryota</taxon>
        <taxon>Sar</taxon>
        <taxon>Alveolata</taxon>
        <taxon>Apicomplexa</taxon>
        <taxon>Conoidasida</taxon>
        <taxon>Coccidia</taxon>
        <taxon>Eucoccidiorida</taxon>
        <taxon>Eimeriorina</taxon>
        <taxon>Cryptosporidiidae</taxon>
        <taxon>Cryptosporidium</taxon>
    </lineage>
</organism>
<gene>
    <name type="ORF">Chro.80282</name>
</gene>
<accession>Q5CL93</accession>
<proteinExistence type="inferred from homology"/>
<feature type="chain" id="PRO_0000384942" description="Protein SEY1 homolog">
    <location>
        <begin position="1"/>
        <end position="815"/>
    </location>
</feature>
<feature type="topological domain" description="Cytoplasmic" evidence="1">
    <location>
        <begin position="1"/>
        <end position="737"/>
    </location>
</feature>
<feature type="transmembrane region" description="Helical" evidence="1">
    <location>
        <begin position="738"/>
        <end position="758"/>
    </location>
</feature>
<feature type="topological domain" description="Lumenal" evidence="1">
    <location>
        <begin position="759"/>
        <end position="761"/>
    </location>
</feature>
<feature type="transmembrane region" description="Helical" evidence="1">
    <location>
        <begin position="762"/>
        <end position="782"/>
    </location>
</feature>
<feature type="topological domain" description="Cytoplasmic" evidence="1">
    <location>
        <begin position="783"/>
        <end position="815"/>
    </location>
</feature>
<feature type="domain" description="GB1/RHD3-type G" evidence="2">
    <location>
        <begin position="28"/>
        <end position="260"/>
    </location>
</feature>
<feature type="coiled-coil region" evidence="1">
    <location>
        <begin position="298"/>
        <end position="321"/>
    </location>
</feature>
<feature type="binding site" evidence="1">
    <location>
        <begin position="38"/>
        <end position="45"/>
    </location>
    <ligand>
        <name>GTP</name>
        <dbReference type="ChEBI" id="CHEBI:37565"/>
    </ligand>
</feature>
<comment type="function">
    <text evidence="1">Probable GTP-binding protein that may be involved in cell development.</text>
</comment>
<comment type="subcellular location">
    <subcellularLocation>
        <location evidence="1">Endoplasmic reticulum membrane</location>
        <topology evidence="1">Multi-pass membrane protein</topology>
    </subcellularLocation>
</comment>
<comment type="similarity">
    <text evidence="2">Belongs to the TRAFAC class dynamin-like GTPase superfamily. GB1/RHD3 GTPase family. RHD3 subfamily.</text>
</comment>
<keyword id="KW-0175">Coiled coil</keyword>
<keyword id="KW-0256">Endoplasmic reticulum</keyword>
<keyword id="KW-0342">GTP-binding</keyword>
<keyword id="KW-0378">Hydrolase</keyword>
<keyword id="KW-0472">Membrane</keyword>
<keyword id="KW-0547">Nucleotide-binding</keyword>
<keyword id="KW-0812">Transmembrane</keyword>
<keyword id="KW-1133">Transmembrane helix</keyword>
<evidence type="ECO:0000255" key="1">
    <source>
        <dbReference type="HAMAP-Rule" id="MF_03109"/>
    </source>
</evidence>
<evidence type="ECO:0000255" key="2">
    <source>
        <dbReference type="PROSITE-ProRule" id="PRU01052"/>
    </source>
</evidence>
<dbReference type="EC" id="3.6.5.-" evidence="1"/>
<dbReference type="EMBL" id="AAEL01000059">
    <property type="protein sequence ID" value="EAL37374.1"/>
    <property type="molecule type" value="Genomic_DNA"/>
</dbReference>
<dbReference type="RefSeq" id="XP_667609.1">
    <property type="nucleotide sequence ID" value="XM_662517.1"/>
</dbReference>
<dbReference type="SMR" id="Q5CL93"/>
<dbReference type="GeneID" id="3415472"/>
<dbReference type="KEGG" id="cho:Chro.80282"/>
<dbReference type="VEuPathDB" id="CryptoDB:Chro.80282"/>
<dbReference type="VEuPathDB" id="CryptoDB:ChTU502y2012_421g0325"/>
<dbReference type="VEuPathDB" id="CryptoDB:CHUDEA8_2410"/>
<dbReference type="VEuPathDB" id="CryptoDB:GY17_00000673"/>
<dbReference type="GO" id="GO:0005789">
    <property type="term" value="C:endoplasmic reticulum membrane"/>
    <property type="evidence" value="ECO:0007669"/>
    <property type="project" value="UniProtKB-SubCell"/>
</dbReference>
<dbReference type="GO" id="GO:0005525">
    <property type="term" value="F:GTP binding"/>
    <property type="evidence" value="ECO:0007669"/>
    <property type="project" value="UniProtKB-UniRule"/>
</dbReference>
<dbReference type="GO" id="GO:0003924">
    <property type="term" value="F:GTPase activity"/>
    <property type="evidence" value="ECO:0007669"/>
    <property type="project" value="UniProtKB-UniRule"/>
</dbReference>
<dbReference type="GO" id="GO:0016320">
    <property type="term" value="P:endoplasmic reticulum membrane fusion"/>
    <property type="evidence" value="ECO:0007669"/>
    <property type="project" value="TreeGrafter"/>
</dbReference>
<dbReference type="Gene3D" id="3.40.50.300">
    <property type="entry name" value="P-loop containing nucleotide triphosphate hydrolases"/>
    <property type="match status" value="1"/>
</dbReference>
<dbReference type="HAMAP" id="MF_03109">
    <property type="entry name" value="Sey1"/>
    <property type="match status" value="1"/>
</dbReference>
<dbReference type="InterPro" id="IPR030386">
    <property type="entry name" value="G_GB1_RHD3_dom"/>
</dbReference>
<dbReference type="InterPro" id="IPR027417">
    <property type="entry name" value="P-loop_NTPase"/>
</dbReference>
<dbReference type="InterPro" id="IPR008803">
    <property type="entry name" value="RHD3/Sey1"/>
</dbReference>
<dbReference type="InterPro" id="IPR046758">
    <property type="entry name" value="Sey1/RHD3-like_3HB"/>
</dbReference>
<dbReference type="PANTHER" id="PTHR45923">
    <property type="entry name" value="PROTEIN SEY1"/>
    <property type="match status" value="1"/>
</dbReference>
<dbReference type="PANTHER" id="PTHR45923:SF2">
    <property type="entry name" value="PROTEIN SEY1"/>
    <property type="match status" value="1"/>
</dbReference>
<dbReference type="Pfam" id="PF05879">
    <property type="entry name" value="RHD3_GTPase"/>
    <property type="match status" value="1"/>
</dbReference>
<dbReference type="Pfam" id="PF20428">
    <property type="entry name" value="Sey1_3HB"/>
    <property type="match status" value="1"/>
</dbReference>
<dbReference type="SUPFAM" id="SSF52540">
    <property type="entry name" value="P-loop containing nucleoside triphosphate hydrolases"/>
    <property type="match status" value="1"/>
</dbReference>
<dbReference type="PROSITE" id="PS51715">
    <property type="entry name" value="G_GB1_RHD3"/>
    <property type="match status" value="1"/>
</dbReference>
<protein>
    <recommendedName>
        <fullName evidence="1">Protein SEY1 homolog</fullName>
        <ecNumber evidence="1">3.6.5.-</ecNumber>
    </recommendedName>
</protein>
<reference key="1">
    <citation type="journal article" date="2004" name="Nature">
        <title>The genome of Cryptosporidium hominis.</title>
        <authorList>
            <person name="Xu P."/>
            <person name="Widmer G."/>
            <person name="Wang Y."/>
            <person name="Ozaki L.S."/>
            <person name="Alves J.M."/>
            <person name="Serrano M.G."/>
            <person name="Puiu D."/>
            <person name="Manque P."/>
            <person name="Akiyoshi D."/>
            <person name="Mackey A.J."/>
            <person name="Pearson W.R."/>
            <person name="Dear P.H."/>
            <person name="Bankier A.T."/>
            <person name="Peterson D.L."/>
            <person name="Abrahamsen M.S."/>
            <person name="Kapur V."/>
            <person name="Tzipori S."/>
            <person name="Buck G.A."/>
        </authorList>
    </citation>
    <scope>NUCLEOTIDE SEQUENCE [LARGE SCALE GENOMIC DNA]</scope>
    <source>
        <strain>TU502</strain>
    </source>
</reference>
<name>SEY1_CRYHO</name>